<feature type="chain" id="PRO_1000193516" description="Peptide chain release factor 3">
    <location>
        <begin position="1"/>
        <end position="526"/>
    </location>
</feature>
<feature type="domain" description="tr-type G">
    <location>
        <begin position="11"/>
        <end position="277"/>
    </location>
</feature>
<feature type="binding site" evidence="1">
    <location>
        <begin position="20"/>
        <end position="27"/>
    </location>
    <ligand>
        <name>GTP</name>
        <dbReference type="ChEBI" id="CHEBI:37565"/>
    </ligand>
</feature>
<feature type="binding site" evidence="1">
    <location>
        <begin position="88"/>
        <end position="92"/>
    </location>
    <ligand>
        <name>GTP</name>
        <dbReference type="ChEBI" id="CHEBI:37565"/>
    </ligand>
</feature>
<feature type="binding site" evidence="1">
    <location>
        <begin position="142"/>
        <end position="145"/>
    </location>
    <ligand>
        <name>GTP</name>
        <dbReference type="ChEBI" id="CHEBI:37565"/>
    </ligand>
</feature>
<sequence length="526" mass="60285">MFDSNHEQELSKRRTFAIISHPDAGKTTITEKMLFFGKVIRVPGTIKGRGSGKYAKSDWMNIEKERGISITTSVMQFTYKNILMNLLDTPGHQDFSEDTYRILTAVDCCLVVIDAAKGIEERTRKLMDVARIHNTPIITFINKLDRDSRDPIEILDEIEKELKLHCIPISWPISCGKNFRGVYHIHDKIIHLYKSKFRKNFLTLDSFLDGSLNEYLGADLSIYIRQELELIMNVYSKFNKEKFLKGITTPIFFGSALGNFGIDHLLDSLIKWAPSPLYRQSNKRIIKPQERNFTGFIFKIQANMDLKHRDRIAFMRIVSGQYTKGMKLTHVRIKKNIIISDAFSFLAGERISINKAYPGDVIGLHNHGTIKIGDTFTQGEEIKFIGIPSFAPEIFRLIYLKNPLKQKQLKKGLVQLSEEGTVQVFRPILNNDLILGAIGILQFDVVIERLRIEYNIDAVYKKVNIVLARWINCGNHHSLYNLKKSYSSYLAYDISNSLIYLAPSSANLNIVMSQNSDISFNATREQ</sequence>
<reference key="1">
    <citation type="journal article" date="2009" name="Science">
        <title>The dynamics and time scale of ongoing genomic erosion in symbiotic bacteria.</title>
        <authorList>
            <person name="Moran N.A."/>
            <person name="McLaughlin H.J."/>
            <person name="Sorek R."/>
        </authorList>
    </citation>
    <scope>NUCLEOTIDE SEQUENCE [LARGE SCALE GENOMIC DNA]</scope>
    <source>
        <strain>Tuc7</strain>
    </source>
</reference>
<gene>
    <name evidence="1" type="primary">prfC</name>
    <name type="ordered locus">BUAPTUC7_537</name>
</gene>
<name>RF3_BUCAT</name>
<protein>
    <recommendedName>
        <fullName evidence="1">Peptide chain release factor 3</fullName>
        <shortName evidence="1">RF-3</shortName>
    </recommendedName>
</protein>
<dbReference type="EMBL" id="CP001158">
    <property type="protein sequence ID" value="ACL30332.1"/>
    <property type="molecule type" value="Genomic_DNA"/>
</dbReference>
<dbReference type="RefSeq" id="WP_012619577.1">
    <property type="nucleotide sequence ID" value="NC_011834.1"/>
</dbReference>
<dbReference type="SMR" id="B8D867"/>
<dbReference type="KEGG" id="bau:BUAPTUC7_537"/>
<dbReference type="HOGENOM" id="CLU_002794_2_1_6"/>
<dbReference type="GO" id="GO:0005829">
    <property type="term" value="C:cytosol"/>
    <property type="evidence" value="ECO:0007669"/>
    <property type="project" value="TreeGrafter"/>
</dbReference>
<dbReference type="GO" id="GO:0005525">
    <property type="term" value="F:GTP binding"/>
    <property type="evidence" value="ECO:0007669"/>
    <property type="project" value="UniProtKB-UniRule"/>
</dbReference>
<dbReference type="GO" id="GO:0003924">
    <property type="term" value="F:GTPase activity"/>
    <property type="evidence" value="ECO:0007669"/>
    <property type="project" value="InterPro"/>
</dbReference>
<dbReference type="GO" id="GO:0097216">
    <property type="term" value="F:guanosine tetraphosphate binding"/>
    <property type="evidence" value="ECO:0007669"/>
    <property type="project" value="UniProtKB-ARBA"/>
</dbReference>
<dbReference type="GO" id="GO:0016150">
    <property type="term" value="F:translation release factor activity, codon nonspecific"/>
    <property type="evidence" value="ECO:0007669"/>
    <property type="project" value="TreeGrafter"/>
</dbReference>
<dbReference type="GO" id="GO:0016149">
    <property type="term" value="F:translation release factor activity, codon specific"/>
    <property type="evidence" value="ECO:0007669"/>
    <property type="project" value="UniProtKB-UniRule"/>
</dbReference>
<dbReference type="GO" id="GO:0006449">
    <property type="term" value="P:regulation of translational termination"/>
    <property type="evidence" value="ECO:0007669"/>
    <property type="project" value="UniProtKB-UniRule"/>
</dbReference>
<dbReference type="CDD" id="cd04169">
    <property type="entry name" value="RF3"/>
    <property type="match status" value="1"/>
</dbReference>
<dbReference type="CDD" id="cd16259">
    <property type="entry name" value="RF3_III"/>
    <property type="match status" value="1"/>
</dbReference>
<dbReference type="FunFam" id="3.30.70.3280:FF:000001">
    <property type="entry name" value="Peptide chain release factor 3"/>
    <property type="match status" value="1"/>
</dbReference>
<dbReference type="FunFam" id="3.40.50.300:FF:000542">
    <property type="entry name" value="Peptide chain release factor 3"/>
    <property type="match status" value="1"/>
</dbReference>
<dbReference type="Gene3D" id="3.40.50.300">
    <property type="entry name" value="P-loop containing nucleotide triphosphate hydrolases"/>
    <property type="match status" value="1"/>
</dbReference>
<dbReference type="Gene3D" id="3.30.70.3280">
    <property type="entry name" value="Peptide chain release factor 3, domain III"/>
    <property type="match status" value="1"/>
</dbReference>
<dbReference type="Gene3D" id="2.40.30.10">
    <property type="entry name" value="Translation factors"/>
    <property type="match status" value="1"/>
</dbReference>
<dbReference type="HAMAP" id="MF_00072">
    <property type="entry name" value="Rel_fac_3"/>
    <property type="match status" value="1"/>
</dbReference>
<dbReference type="InterPro" id="IPR053905">
    <property type="entry name" value="EF-G-like_DII"/>
</dbReference>
<dbReference type="InterPro" id="IPR035647">
    <property type="entry name" value="EFG_III/V"/>
</dbReference>
<dbReference type="InterPro" id="IPR031157">
    <property type="entry name" value="G_TR_CS"/>
</dbReference>
<dbReference type="InterPro" id="IPR027417">
    <property type="entry name" value="P-loop_NTPase"/>
</dbReference>
<dbReference type="InterPro" id="IPR004548">
    <property type="entry name" value="PrfC"/>
</dbReference>
<dbReference type="InterPro" id="IPR032090">
    <property type="entry name" value="RF3_C"/>
</dbReference>
<dbReference type="InterPro" id="IPR038467">
    <property type="entry name" value="RF3_dom_3_sf"/>
</dbReference>
<dbReference type="InterPro" id="IPR041732">
    <property type="entry name" value="RF3_GTP-bd"/>
</dbReference>
<dbReference type="InterPro" id="IPR005225">
    <property type="entry name" value="Small_GTP-bd"/>
</dbReference>
<dbReference type="InterPro" id="IPR000795">
    <property type="entry name" value="T_Tr_GTP-bd_dom"/>
</dbReference>
<dbReference type="InterPro" id="IPR009000">
    <property type="entry name" value="Transl_B-barrel_sf"/>
</dbReference>
<dbReference type="NCBIfam" id="TIGR00503">
    <property type="entry name" value="prfC"/>
    <property type="match status" value="1"/>
</dbReference>
<dbReference type="NCBIfam" id="NF001964">
    <property type="entry name" value="PRK00741.1"/>
    <property type="match status" value="1"/>
</dbReference>
<dbReference type="NCBIfam" id="TIGR00231">
    <property type="entry name" value="small_GTP"/>
    <property type="match status" value="1"/>
</dbReference>
<dbReference type="PANTHER" id="PTHR43556">
    <property type="entry name" value="PEPTIDE CHAIN RELEASE FACTOR RF3"/>
    <property type="match status" value="1"/>
</dbReference>
<dbReference type="PANTHER" id="PTHR43556:SF2">
    <property type="entry name" value="PEPTIDE CHAIN RELEASE FACTOR RF3"/>
    <property type="match status" value="1"/>
</dbReference>
<dbReference type="Pfam" id="PF22042">
    <property type="entry name" value="EF-G_D2"/>
    <property type="match status" value="1"/>
</dbReference>
<dbReference type="Pfam" id="PF00009">
    <property type="entry name" value="GTP_EFTU"/>
    <property type="match status" value="1"/>
</dbReference>
<dbReference type="Pfam" id="PF16658">
    <property type="entry name" value="RF3_C"/>
    <property type="match status" value="1"/>
</dbReference>
<dbReference type="PRINTS" id="PR00315">
    <property type="entry name" value="ELONGATNFCT"/>
</dbReference>
<dbReference type="SUPFAM" id="SSF54980">
    <property type="entry name" value="EF-G C-terminal domain-like"/>
    <property type="match status" value="1"/>
</dbReference>
<dbReference type="SUPFAM" id="SSF52540">
    <property type="entry name" value="P-loop containing nucleoside triphosphate hydrolases"/>
    <property type="match status" value="1"/>
</dbReference>
<dbReference type="SUPFAM" id="SSF50447">
    <property type="entry name" value="Translation proteins"/>
    <property type="match status" value="1"/>
</dbReference>
<dbReference type="PROSITE" id="PS00301">
    <property type="entry name" value="G_TR_1"/>
    <property type="match status" value="1"/>
</dbReference>
<dbReference type="PROSITE" id="PS51722">
    <property type="entry name" value="G_TR_2"/>
    <property type="match status" value="1"/>
</dbReference>
<comment type="function">
    <text evidence="1">Increases the formation of ribosomal termination complexes and stimulates activities of RF-1 and RF-2. It binds guanine nucleotides and has strong preference for UGA stop codons. It may interact directly with the ribosome. The stimulation of RF-1 and RF-2 is significantly reduced by GTP and GDP, but not by GMP.</text>
</comment>
<comment type="subcellular location">
    <subcellularLocation>
        <location evidence="1">Cytoplasm</location>
    </subcellularLocation>
</comment>
<comment type="similarity">
    <text evidence="1">Belongs to the TRAFAC class translation factor GTPase superfamily. Classic translation factor GTPase family. PrfC subfamily.</text>
</comment>
<evidence type="ECO:0000255" key="1">
    <source>
        <dbReference type="HAMAP-Rule" id="MF_00072"/>
    </source>
</evidence>
<keyword id="KW-0963">Cytoplasm</keyword>
<keyword id="KW-0342">GTP-binding</keyword>
<keyword id="KW-0547">Nucleotide-binding</keyword>
<keyword id="KW-0648">Protein biosynthesis</keyword>
<accession>B8D867</accession>
<proteinExistence type="inferred from homology"/>
<organism>
    <name type="scientific">Buchnera aphidicola subsp. Acyrthosiphon pisum (strain Tuc7)</name>
    <dbReference type="NCBI Taxonomy" id="561501"/>
    <lineage>
        <taxon>Bacteria</taxon>
        <taxon>Pseudomonadati</taxon>
        <taxon>Pseudomonadota</taxon>
        <taxon>Gammaproteobacteria</taxon>
        <taxon>Enterobacterales</taxon>
        <taxon>Erwiniaceae</taxon>
        <taxon>Buchnera</taxon>
    </lineage>
</organism>